<feature type="signal peptide" evidence="1">
    <location>
        <begin position="1"/>
        <end position="23"/>
    </location>
</feature>
<feature type="chain" id="PRO_0000022191" description="Probable phosphite transport system-binding protein PtxB">
    <location>
        <begin position="24"/>
        <end position="287"/>
    </location>
</feature>
<feature type="strand" evidence="4">
    <location>
        <begin position="29"/>
        <end position="35"/>
    </location>
</feature>
<feature type="helix" evidence="4">
    <location>
        <begin position="41"/>
        <end position="59"/>
    </location>
</feature>
<feature type="strand" evidence="4">
    <location>
        <begin position="61"/>
        <end position="66"/>
    </location>
</feature>
<feature type="helix" evidence="4">
    <location>
        <begin position="71"/>
        <end position="79"/>
    </location>
</feature>
<feature type="strand" evidence="4">
    <location>
        <begin position="84"/>
        <end position="87"/>
    </location>
</feature>
<feature type="helix" evidence="4">
    <location>
        <begin position="90"/>
        <end position="99"/>
    </location>
</feature>
<feature type="strand" evidence="4">
    <location>
        <begin position="102"/>
        <end position="110"/>
    </location>
</feature>
<feature type="strand" evidence="4">
    <location>
        <begin position="113"/>
        <end position="116"/>
    </location>
</feature>
<feature type="strand" evidence="4">
    <location>
        <begin position="118"/>
        <end position="123"/>
    </location>
</feature>
<feature type="turn" evidence="4">
    <location>
        <begin position="124"/>
        <end position="127"/>
    </location>
</feature>
<feature type="helix" evidence="4">
    <location>
        <begin position="131"/>
        <end position="134"/>
    </location>
</feature>
<feature type="strand" evidence="4">
    <location>
        <begin position="137"/>
        <end position="142"/>
    </location>
</feature>
<feature type="turn" evidence="4">
    <location>
        <begin position="147"/>
        <end position="150"/>
    </location>
</feature>
<feature type="helix" evidence="4">
    <location>
        <begin position="151"/>
        <end position="161"/>
    </location>
</feature>
<feature type="turn" evidence="4">
    <location>
        <begin position="165"/>
        <end position="167"/>
    </location>
</feature>
<feature type="strand" evidence="4">
    <location>
        <begin position="168"/>
        <end position="173"/>
    </location>
</feature>
<feature type="helix" evidence="4">
    <location>
        <begin position="177"/>
        <end position="185"/>
    </location>
</feature>
<feature type="strand" evidence="4">
    <location>
        <begin position="190"/>
        <end position="195"/>
    </location>
</feature>
<feature type="helix" evidence="4">
    <location>
        <begin position="196"/>
        <end position="201"/>
    </location>
</feature>
<feature type="turn" evidence="4">
    <location>
        <begin position="202"/>
        <end position="206"/>
    </location>
</feature>
<feature type="helix" evidence="4">
    <location>
        <begin position="210"/>
        <end position="212"/>
    </location>
</feature>
<feature type="strand" evidence="4">
    <location>
        <begin position="213"/>
        <end position="218"/>
    </location>
</feature>
<feature type="strand" evidence="4">
    <location>
        <begin position="227"/>
        <end position="230"/>
    </location>
</feature>
<feature type="helix" evidence="4">
    <location>
        <begin position="235"/>
        <end position="246"/>
    </location>
</feature>
<feature type="helix" evidence="4">
    <location>
        <begin position="251"/>
        <end position="255"/>
    </location>
</feature>
<feature type="turn" evidence="4">
    <location>
        <begin position="256"/>
        <end position="258"/>
    </location>
</feature>
<feature type="strand" evidence="4">
    <location>
        <begin position="259"/>
        <end position="263"/>
    </location>
</feature>
<feature type="helix" evidence="4">
    <location>
        <begin position="267"/>
        <end position="270"/>
    </location>
</feature>
<feature type="helix" evidence="4">
    <location>
        <begin position="271"/>
        <end position="276"/>
    </location>
</feature>
<feature type="helix" evidence="4">
    <location>
        <begin position="277"/>
        <end position="280"/>
    </location>
</feature>
<sequence>MKRLSALLLTCLLSAVSSLSALAADADPDVLKVALLPDENASELIKRNQPLKDYLEEHLDKKVQLIVTTDYSSMIEAMRFGRIDLAYFGPLSYVMAKSKSDIEPFAAMVIDGKPTYRSVIIANVASGVNEYADLKGKRMAYGDRASTSSHLIPKTVLLETADLTGGQDYEQHFVGTHDAVAVNVANGNADAGGLSEVIFNHAAERGLIDPSKVKVLGYSGEYPQYPWAMRSNLSPELKTKVRDVFVGIDDPEVLRNFKAEAFAPITDADYDVIRNMGSLLGLDFATM</sequence>
<accession>O69052</accession>
<protein>
    <recommendedName>
        <fullName>Probable phosphite transport system-binding protein PtxB</fullName>
    </recommendedName>
</protein>
<keyword id="KW-0002">3D-structure</keyword>
<keyword id="KW-0732">Signal</keyword>
<keyword id="KW-0813">Transport</keyword>
<gene>
    <name type="primary">ptxB</name>
</gene>
<evidence type="ECO:0000255" key="1"/>
<evidence type="ECO:0000269" key="2">
    <source>
    </source>
</evidence>
<evidence type="ECO:0000305" key="3"/>
<evidence type="ECO:0007829" key="4">
    <source>
        <dbReference type="PDB" id="5O37"/>
    </source>
</evidence>
<organism>
    <name type="scientific">Stutzerimonas stutzeri</name>
    <name type="common">Pseudomonas stutzeri</name>
    <dbReference type="NCBI Taxonomy" id="316"/>
    <lineage>
        <taxon>Bacteria</taxon>
        <taxon>Pseudomonadati</taxon>
        <taxon>Pseudomonadota</taxon>
        <taxon>Gammaproteobacteria</taxon>
        <taxon>Pseudomonadales</taxon>
        <taxon>Pseudomonadaceae</taxon>
        <taxon>Stutzerimonas</taxon>
    </lineage>
</organism>
<proteinExistence type="evidence at protein level"/>
<comment type="function">
    <text evidence="2">Probably forms part of a binding-protein-dependent phosphite transporter. Required for oxidation of phosphite to phosphate.</text>
</comment>
<comment type="similarity">
    <text evidence="3">Belongs to the phosphate/phosphite/phosphonate binding protein family.</text>
</comment>
<dbReference type="EMBL" id="AF061070">
    <property type="protein sequence ID" value="AAC71707.1"/>
    <property type="molecule type" value="Genomic_DNA"/>
</dbReference>
<dbReference type="PDB" id="5O2J">
    <property type="method" value="X-ray"/>
    <property type="resolution" value="1.52 A"/>
    <property type="chains" value="A=24-287"/>
</dbReference>
<dbReference type="PDB" id="5O2K">
    <property type="method" value="X-ray"/>
    <property type="resolution" value="2.10 A"/>
    <property type="chains" value="A/B/C/D/E/F=24-287"/>
</dbReference>
<dbReference type="PDB" id="5O37">
    <property type="method" value="X-ray"/>
    <property type="resolution" value="1.37 A"/>
    <property type="chains" value="A=24-287"/>
</dbReference>
<dbReference type="PDBsum" id="5O2J"/>
<dbReference type="PDBsum" id="5O2K"/>
<dbReference type="PDBsum" id="5O37"/>
<dbReference type="SMR" id="O69052"/>
<dbReference type="OrthoDB" id="5318791at2"/>
<dbReference type="GO" id="GO:0043190">
    <property type="term" value="C:ATP-binding cassette (ABC) transporter complex"/>
    <property type="evidence" value="ECO:0007669"/>
    <property type="project" value="InterPro"/>
</dbReference>
<dbReference type="GO" id="GO:0055085">
    <property type="term" value="P:transmembrane transport"/>
    <property type="evidence" value="ECO:0007669"/>
    <property type="project" value="InterPro"/>
</dbReference>
<dbReference type="CDD" id="cd13572">
    <property type="entry name" value="PBP2_PnhD_2"/>
    <property type="match status" value="1"/>
</dbReference>
<dbReference type="Gene3D" id="3.40.190.10">
    <property type="entry name" value="Periplasmic binding protein-like II"/>
    <property type="match status" value="2"/>
</dbReference>
<dbReference type="InterPro" id="IPR005770">
    <property type="entry name" value="PhnD"/>
</dbReference>
<dbReference type="NCBIfam" id="TIGR01098">
    <property type="entry name" value="3A0109s03R"/>
    <property type="match status" value="1"/>
</dbReference>
<dbReference type="PANTHER" id="PTHR35841">
    <property type="entry name" value="PHOSPHONATES-BINDING PERIPLASMIC PROTEIN"/>
    <property type="match status" value="1"/>
</dbReference>
<dbReference type="PANTHER" id="PTHR35841:SF1">
    <property type="entry name" value="PHOSPHONATES-BINDING PERIPLASMIC PROTEIN"/>
    <property type="match status" value="1"/>
</dbReference>
<dbReference type="Pfam" id="PF12974">
    <property type="entry name" value="Phosphonate-bd"/>
    <property type="match status" value="1"/>
</dbReference>
<dbReference type="SUPFAM" id="SSF53850">
    <property type="entry name" value="Periplasmic binding protein-like II"/>
    <property type="match status" value="1"/>
</dbReference>
<reference key="1">
    <citation type="journal article" date="1998" name="J. Bacteriol.">
        <title>Molecular genetic analysis of phosphite and hypophosphite oxidation by Pseudomonas stutzeri WM88.</title>
        <authorList>
            <person name="Metcalf W.W."/>
            <person name="Wolfe R.S."/>
        </authorList>
    </citation>
    <scope>NUCLEOTIDE SEQUENCE [GENOMIC DNA]</scope>
    <scope>FUNCTION</scope>
    <source>
        <strain>WM88</strain>
    </source>
</reference>
<name>PTXB_STUST</name>